<gene>
    <name type="primary">rplT</name>
</gene>
<comment type="function">
    <text evidence="1">Binds directly to 23S ribosomal RNA and is necessary for the in vitro assembly process of the 50S ribosomal subunit. It is not involved in the protein synthesizing functions of that subunit (By similarity).</text>
</comment>
<comment type="similarity">
    <text evidence="2">Belongs to the bacterial ribosomal protein bL20 family.</text>
</comment>
<reference key="1">
    <citation type="submission" date="1999-03" db="EMBL/GenBank/DDBJ databases">
        <title>Global GacA-steered control of secondary metabolism in Pseudomonas fluorescens acts on specific ribosome binding sites.</title>
        <authorList>
            <person name="Blumer C."/>
            <person name="Heeb S."/>
            <person name="Pessi G."/>
            <person name="Haas D."/>
        </authorList>
    </citation>
    <scope>NUCLEOTIDE SEQUENCE [GENOMIC DNA]</scope>
    <source>
        <strain>DSM 19095 / LMG 27888 / CFBP 6595 / CHA0</strain>
    </source>
</reference>
<protein>
    <recommendedName>
        <fullName evidence="2">Large ribosomal subunit protein bL20</fullName>
    </recommendedName>
    <alternativeName>
        <fullName>50S ribosomal protein L20</fullName>
    </alternativeName>
</protein>
<organism>
    <name type="scientific">Pseudomonas protegens (strain DSM 19095 / LMG 27888 / CFBP 6595 / CHA0)</name>
    <dbReference type="NCBI Taxonomy" id="1124983"/>
    <lineage>
        <taxon>Bacteria</taxon>
        <taxon>Pseudomonadati</taxon>
        <taxon>Pseudomonadota</taxon>
        <taxon>Gammaproteobacteria</taxon>
        <taxon>Pseudomonadales</taxon>
        <taxon>Pseudomonadaceae</taxon>
        <taxon>Pseudomonas</taxon>
    </lineage>
</organism>
<dbReference type="EMBL" id="AF136400">
    <property type="protein sequence ID" value="AAD34789.1"/>
    <property type="molecule type" value="Genomic_DNA"/>
</dbReference>
<dbReference type="RefSeq" id="WP_011060418.1">
    <property type="nucleotide sequence ID" value="NZ_LS999205.1"/>
</dbReference>
<dbReference type="SMR" id="Q9X6E8"/>
<dbReference type="GeneID" id="57475156"/>
<dbReference type="PATRIC" id="fig|1124983.3.peg.2172"/>
<dbReference type="eggNOG" id="COG0292">
    <property type="taxonomic scope" value="Bacteria"/>
</dbReference>
<dbReference type="GO" id="GO:1990904">
    <property type="term" value="C:ribonucleoprotein complex"/>
    <property type="evidence" value="ECO:0007669"/>
    <property type="project" value="UniProtKB-KW"/>
</dbReference>
<dbReference type="GO" id="GO:0005840">
    <property type="term" value="C:ribosome"/>
    <property type="evidence" value="ECO:0007669"/>
    <property type="project" value="UniProtKB-KW"/>
</dbReference>
<dbReference type="GO" id="GO:0019843">
    <property type="term" value="F:rRNA binding"/>
    <property type="evidence" value="ECO:0007669"/>
    <property type="project" value="UniProtKB-UniRule"/>
</dbReference>
<dbReference type="GO" id="GO:0003735">
    <property type="term" value="F:structural constituent of ribosome"/>
    <property type="evidence" value="ECO:0007669"/>
    <property type="project" value="InterPro"/>
</dbReference>
<dbReference type="GO" id="GO:0000027">
    <property type="term" value="P:ribosomal large subunit assembly"/>
    <property type="evidence" value="ECO:0007669"/>
    <property type="project" value="UniProtKB-UniRule"/>
</dbReference>
<dbReference type="GO" id="GO:0006412">
    <property type="term" value="P:translation"/>
    <property type="evidence" value="ECO:0007669"/>
    <property type="project" value="InterPro"/>
</dbReference>
<dbReference type="CDD" id="cd07026">
    <property type="entry name" value="Ribosomal_L20"/>
    <property type="match status" value="1"/>
</dbReference>
<dbReference type="FunFam" id="1.10.1900.20:FF:000001">
    <property type="entry name" value="50S ribosomal protein L20"/>
    <property type="match status" value="1"/>
</dbReference>
<dbReference type="Gene3D" id="6.10.160.10">
    <property type="match status" value="1"/>
</dbReference>
<dbReference type="Gene3D" id="1.10.1900.20">
    <property type="entry name" value="Ribosomal protein L20"/>
    <property type="match status" value="1"/>
</dbReference>
<dbReference type="HAMAP" id="MF_00382">
    <property type="entry name" value="Ribosomal_bL20"/>
    <property type="match status" value="1"/>
</dbReference>
<dbReference type="InterPro" id="IPR005813">
    <property type="entry name" value="Ribosomal_bL20"/>
</dbReference>
<dbReference type="InterPro" id="IPR049946">
    <property type="entry name" value="RIBOSOMAL_L20_CS"/>
</dbReference>
<dbReference type="InterPro" id="IPR035566">
    <property type="entry name" value="Ribosomal_protein_bL20_C"/>
</dbReference>
<dbReference type="NCBIfam" id="TIGR01032">
    <property type="entry name" value="rplT_bact"/>
    <property type="match status" value="1"/>
</dbReference>
<dbReference type="PANTHER" id="PTHR10986">
    <property type="entry name" value="39S RIBOSOMAL PROTEIN L20"/>
    <property type="match status" value="1"/>
</dbReference>
<dbReference type="Pfam" id="PF00453">
    <property type="entry name" value="Ribosomal_L20"/>
    <property type="match status" value="1"/>
</dbReference>
<dbReference type="PRINTS" id="PR00062">
    <property type="entry name" value="RIBOSOMALL20"/>
</dbReference>
<dbReference type="SUPFAM" id="SSF74731">
    <property type="entry name" value="Ribosomal protein L20"/>
    <property type="match status" value="1"/>
</dbReference>
<dbReference type="PROSITE" id="PS00937">
    <property type="entry name" value="RIBOSOMAL_L20"/>
    <property type="match status" value="1"/>
</dbReference>
<accession>Q9X6E8</accession>
<evidence type="ECO:0000250" key="1"/>
<evidence type="ECO:0000305" key="2"/>
<sequence>MARVKRGVIARKRHKKILKLAKGYYGARSRVFRVAKQAVIKAGQYAYRDRRQKKRQFRALWIARINAGARNNGLSYSRLIAGLKKASIEIDRKVLADLAVNEKAAFAAIVEKAKATLA</sequence>
<keyword id="KW-0687">Ribonucleoprotein</keyword>
<keyword id="KW-0689">Ribosomal protein</keyword>
<keyword id="KW-0694">RNA-binding</keyword>
<keyword id="KW-0699">rRNA-binding</keyword>
<proteinExistence type="inferred from homology"/>
<name>RL20_PSEPH</name>
<feature type="chain" id="PRO_0000177207" description="Large ribosomal subunit protein bL20">
    <location>
        <begin position="1"/>
        <end position="118"/>
    </location>
</feature>